<proteinExistence type="evidence at transcript level"/>
<reference key="1">
    <citation type="journal article" date="2010" name="Plant J.">
        <title>Histone hyperacetylation affects meiotic recombination and chromosome segregation in Arabidopsis.</title>
        <authorList>
            <person name="Perrella G."/>
            <person name="Consiglio M.F."/>
            <person name="Aiese-Cigliano R."/>
            <person name="Cremona G."/>
            <person name="Sanchez-Moran E."/>
            <person name="Barra L."/>
            <person name="Errico A."/>
            <person name="Bressan R.A."/>
            <person name="Franklin F.C."/>
            <person name="Conicella C."/>
        </authorList>
    </citation>
    <scope>NUCLEOTIDE SEQUENCE [MRNA]</scope>
    <scope>FUNCTION</scope>
</reference>
<reference key="2">
    <citation type="journal article" date="2000" name="Nature">
        <title>Sequence and analysis of chromosome 3 of the plant Arabidopsis thaliana.</title>
        <authorList>
            <person name="Salanoubat M."/>
            <person name="Lemcke K."/>
            <person name="Rieger M."/>
            <person name="Ansorge W."/>
            <person name="Unseld M."/>
            <person name="Fartmann B."/>
            <person name="Valle G."/>
            <person name="Bloecker H."/>
            <person name="Perez-Alonso M."/>
            <person name="Obermaier B."/>
            <person name="Delseny M."/>
            <person name="Boutry M."/>
            <person name="Grivell L.A."/>
            <person name="Mache R."/>
            <person name="Puigdomenech P."/>
            <person name="De Simone V."/>
            <person name="Choisne N."/>
            <person name="Artiguenave F."/>
            <person name="Robert C."/>
            <person name="Brottier P."/>
            <person name="Wincker P."/>
            <person name="Cattolico L."/>
            <person name="Weissenbach J."/>
            <person name="Saurin W."/>
            <person name="Quetier F."/>
            <person name="Schaefer M."/>
            <person name="Mueller-Auer S."/>
            <person name="Gabel C."/>
            <person name="Fuchs M."/>
            <person name="Benes V."/>
            <person name="Wurmbach E."/>
            <person name="Drzonek H."/>
            <person name="Erfle H."/>
            <person name="Jordan N."/>
            <person name="Bangert S."/>
            <person name="Wiedelmann R."/>
            <person name="Kranz H."/>
            <person name="Voss H."/>
            <person name="Holland R."/>
            <person name="Brandt P."/>
            <person name="Nyakatura G."/>
            <person name="Vezzi A."/>
            <person name="D'Angelo M."/>
            <person name="Pallavicini A."/>
            <person name="Toppo S."/>
            <person name="Simionati B."/>
            <person name="Conrad A."/>
            <person name="Hornischer K."/>
            <person name="Kauer G."/>
            <person name="Loehnert T.-H."/>
            <person name="Nordsiek G."/>
            <person name="Reichelt J."/>
            <person name="Scharfe M."/>
            <person name="Schoen O."/>
            <person name="Bargues M."/>
            <person name="Terol J."/>
            <person name="Climent J."/>
            <person name="Navarro P."/>
            <person name="Collado C."/>
            <person name="Perez-Perez A."/>
            <person name="Ottenwaelder B."/>
            <person name="Duchemin D."/>
            <person name="Cooke R."/>
            <person name="Laudie M."/>
            <person name="Berger-Llauro C."/>
            <person name="Purnelle B."/>
            <person name="Masuy D."/>
            <person name="de Haan M."/>
            <person name="Maarse A.C."/>
            <person name="Alcaraz J.-P."/>
            <person name="Cottet A."/>
            <person name="Casacuberta E."/>
            <person name="Monfort A."/>
            <person name="Argiriou A."/>
            <person name="Flores M."/>
            <person name="Liguori R."/>
            <person name="Vitale D."/>
            <person name="Mannhaupt G."/>
            <person name="Haase D."/>
            <person name="Schoof H."/>
            <person name="Rudd S."/>
            <person name="Zaccaria P."/>
            <person name="Mewes H.-W."/>
            <person name="Mayer K.F.X."/>
            <person name="Kaul S."/>
            <person name="Town C.D."/>
            <person name="Koo H.L."/>
            <person name="Tallon L.J."/>
            <person name="Jenkins J."/>
            <person name="Rooney T."/>
            <person name="Rizzo M."/>
            <person name="Walts A."/>
            <person name="Utterback T."/>
            <person name="Fujii C.Y."/>
            <person name="Shea T.P."/>
            <person name="Creasy T.H."/>
            <person name="Haas B."/>
            <person name="Maiti R."/>
            <person name="Wu D."/>
            <person name="Peterson J."/>
            <person name="Van Aken S."/>
            <person name="Pai G."/>
            <person name="Militscher J."/>
            <person name="Sellers P."/>
            <person name="Gill J.E."/>
            <person name="Feldblyum T.V."/>
            <person name="Preuss D."/>
            <person name="Lin X."/>
            <person name="Nierman W.C."/>
            <person name="Salzberg S.L."/>
            <person name="White O."/>
            <person name="Venter J.C."/>
            <person name="Fraser C.M."/>
            <person name="Kaneko T."/>
            <person name="Nakamura Y."/>
            <person name="Sato S."/>
            <person name="Kato T."/>
            <person name="Asamizu E."/>
            <person name="Sasamoto S."/>
            <person name="Kimura T."/>
            <person name="Idesawa K."/>
            <person name="Kawashima K."/>
            <person name="Kishida Y."/>
            <person name="Kiyokawa C."/>
            <person name="Kohara M."/>
            <person name="Matsumoto M."/>
            <person name="Matsuno A."/>
            <person name="Muraki A."/>
            <person name="Nakayama S."/>
            <person name="Nakazaki N."/>
            <person name="Shinpo S."/>
            <person name="Takeuchi C."/>
            <person name="Wada T."/>
            <person name="Watanabe A."/>
            <person name="Yamada M."/>
            <person name="Yasuda M."/>
            <person name="Tabata S."/>
        </authorList>
    </citation>
    <scope>NUCLEOTIDE SEQUENCE [LARGE SCALE GENOMIC DNA]</scope>
    <source>
        <strain>cv. Columbia</strain>
    </source>
</reference>
<reference key="3">
    <citation type="journal article" date="2017" name="Plant J.">
        <title>Araport11: a complete reannotation of the Arabidopsis thaliana reference genome.</title>
        <authorList>
            <person name="Cheng C.Y."/>
            <person name="Krishnakumar V."/>
            <person name="Chan A.P."/>
            <person name="Thibaud-Nissen F."/>
            <person name="Schobel S."/>
            <person name="Town C.D."/>
        </authorList>
    </citation>
    <scope>GENOME REANNOTATION</scope>
    <source>
        <strain>cv. Columbia</strain>
    </source>
</reference>
<name>MCC1_ARATH</name>
<feature type="chain" id="PRO_0000423405" description="Histone acetyltransferase MCC1">
    <location>
        <begin position="1"/>
        <end position="247"/>
    </location>
</feature>
<feature type="domain" description="N-acetyltransferase" evidence="1">
    <location>
        <begin position="25"/>
        <end position="198"/>
    </location>
</feature>
<organism>
    <name type="scientific">Arabidopsis thaliana</name>
    <name type="common">Mouse-ear cress</name>
    <dbReference type="NCBI Taxonomy" id="3702"/>
    <lineage>
        <taxon>Eukaryota</taxon>
        <taxon>Viridiplantae</taxon>
        <taxon>Streptophyta</taxon>
        <taxon>Embryophyta</taxon>
        <taxon>Tracheophyta</taxon>
        <taxon>Spermatophyta</taxon>
        <taxon>Magnoliopsida</taxon>
        <taxon>eudicotyledons</taxon>
        <taxon>Gunneridae</taxon>
        <taxon>Pentapetalae</taxon>
        <taxon>rosids</taxon>
        <taxon>malvids</taxon>
        <taxon>Brassicales</taxon>
        <taxon>Brassicaceae</taxon>
        <taxon>Camelineae</taxon>
        <taxon>Arabidopsis</taxon>
    </lineage>
</organism>
<gene>
    <name type="primary">MCC1</name>
    <name type="ordered locus">At3g02980</name>
    <name type="ORF">F13E7.7</name>
</gene>
<keyword id="KW-0012">Acyltransferase</keyword>
<keyword id="KW-0156">Chromatin regulator</keyword>
<keyword id="KW-0159">Chromosome partition</keyword>
<keyword id="KW-0469">Meiosis</keyword>
<keyword id="KW-1185">Reference proteome</keyword>
<keyword id="KW-0808">Transferase</keyword>
<sequence length="247" mass="28306">MSRFPRRFIDDSSMEDAGISLCPSIHYRPINPNDLDRLEQIHRDIFPIKYESEFFQSVVNGVDIVSWAAVDRSRPDDHSDELIGFVTAKFVLAKDSEIDDLIHYDSSKGEETLIYILTLGVVETYRNRGIAMSLISEVIKYASGLSVCRGVYLHVIAHNNAAICLYKRLMFRCVRRLHGFYLINRHHFDAFLFVYFINGSRTPCSPLEVAMFVVNYMKSGIKSVASKLANKDEKGLKWLFCKDTDCV</sequence>
<comment type="function">
    <text evidence="2">Histone acetyltransferase that probably regulates acetylation status of histone H3 during meiosis. Histone acetylation may influence recombination and chromosome segregation.</text>
</comment>
<comment type="catalytic activity">
    <reaction>
        <text>L-lysyl-[protein] + acetyl-CoA = N(6)-acetyl-L-lysyl-[protein] + CoA + H(+)</text>
        <dbReference type="Rhea" id="RHEA:45948"/>
        <dbReference type="Rhea" id="RHEA-COMP:9752"/>
        <dbReference type="Rhea" id="RHEA-COMP:10731"/>
        <dbReference type="ChEBI" id="CHEBI:15378"/>
        <dbReference type="ChEBI" id="CHEBI:29969"/>
        <dbReference type="ChEBI" id="CHEBI:57287"/>
        <dbReference type="ChEBI" id="CHEBI:57288"/>
        <dbReference type="ChEBI" id="CHEBI:61930"/>
        <dbReference type="EC" id="2.3.1.48"/>
    </reaction>
</comment>
<comment type="miscellaneous">
    <text evidence="4">The gain-of-function mutant mcc1 (T-DNA tagging) has elongated rosette leaves, increased stem length elongation, early flowering and reduced fertility and seed number due to defects in meiosis.</text>
</comment>
<comment type="similarity">
    <text evidence="3">Belongs to the acetyltransferase family.</text>
</comment>
<dbReference type="EC" id="2.3.1.48"/>
<dbReference type="EMBL" id="EU598461">
    <property type="protein sequence ID" value="ACF05703.1"/>
    <property type="molecule type" value="mRNA"/>
</dbReference>
<dbReference type="EMBL" id="AC018363">
    <property type="protein sequence ID" value="AAF26961.1"/>
    <property type="molecule type" value="Genomic_DNA"/>
</dbReference>
<dbReference type="EMBL" id="CP002686">
    <property type="protein sequence ID" value="AEE73887.1"/>
    <property type="molecule type" value="Genomic_DNA"/>
</dbReference>
<dbReference type="RefSeq" id="NP_186948.1">
    <property type="nucleotide sequence ID" value="NM_111168.2"/>
</dbReference>
<dbReference type="SMR" id="Q9M8T9"/>
<dbReference type="FunCoup" id="Q9M8T9">
    <property type="interactions" value="3179"/>
</dbReference>
<dbReference type="STRING" id="3702.Q9M8T9"/>
<dbReference type="PaxDb" id="3702-AT3G02980.1"/>
<dbReference type="ProteomicsDB" id="238818"/>
<dbReference type="EnsemblPlants" id="AT3G02980.1">
    <property type="protein sequence ID" value="AT3G02980.1"/>
    <property type="gene ID" value="AT3G02980"/>
</dbReference>
<dbReference type="GeneID" id="821166"/>
<dbReference type="Gramene" id="AT3G02980.1">
    <property type="protein sequence ID" value="AT3G02980.1"/>
    <property type="gene ID" value="AT3G02980"/>
</dbReference>
<dbReference type="KEGG" id="ath:AT3G02980"/>
<dbReference type="Araport" id="AT3G02980"/>
<dbReference type="TAIR" id="AT3G02980">
    <property type="gene designation" value="MCC1"/>
</dbReference>
<dbReference type="eggNOG" id="KOG3138">
    <property type="taxonomic scope" value="Eukaryota"/>
</dbReference>
<dbReference type="HOGENOM" id="CLU_013985_5_0_1"/>
<dbReference type="InParanoid" id="Q9M8T9"/>
<dbReference type="OMA" id="QTWKQWF"/>
<dbReference type="OrthoDB" id="47374at2759"/>
<dbReference type="PhylomeDB" id="Q9M8T9"/>
<dbReference type="PRO" id="PR:Q9M8T9"/>
<dbReference type="Proteomes" id="UP000006548">
    <property type="component" value="Chromosome 3"/>
</dbReference>
<dbReference type="ExpressionAtlas" id="Q9M8T9">
    <property type="expression patterns" value="baseline and differential"/>
</dbReference>
<dbReference type="GO" id="GO:0004402">
    <property type="term" value="F:histone acetyltransferase activity"/>
    <property type="evidence" value="ECO:0007669"/>
    <property type="project" value="UniProtKB-EC"/>
</dbReference>
<dbReference type="GO" id="GO:0004596">
    <property type="term" value="F:protein-N-terminal amino-acid acetyltransferase activity"/>
    <property type="evidence" value="ECO:0007669"/>
    <property type="project" value="InterPro"/>
</dbReference>
<dbReference type="GO" id="GO:0007059">
    <property type="term" value="P:chromosome segregation"/>
    <property type="evidence" value="ECO:0007669"/>
    <property type="project" value="UniProtKB-KW"/>
</dbReference>
<dbReference type="GO" id="GO:0051321">
    <property type="term" value="P:meiotic cell cycle"/>
    <property type="evidence" value="ECO:0000315"/>
    <property type="project" value="TAIR"/>
</dbReference>
<dbReference type="CDD" id="cd04301">
    <property type="entry name" value="NAT_SF"/>
    <property type="match status" value="1"/>
</dbReference>
<dbReference type="FunFam" id="3.40.630.30:FF:000041">
    <property type="entry name" value="Histone acetyltransferase MCC1 isoform A"/>
    <property type="match status" value="1"/>
</dbReference>
<dbReference type="Gene3D" id="3.40.630.30">
    <property type="match status" value="1"/>
</dbReference>
<dbReference type="InterPro" id="IPR016181">
    <property type="entry name" value="Acyl_CoA_acyltransferase"/>
</dbReference>
<dbReference type="InterPro" id="IPR000182">
    <property type="entry name" value="GNAT_dom"/>
</dbReference>
<dbReference type="InterPro" id="IPR045141">
    <property type="entry name" value="NAA60-like"/>
</dbReference>
<dbReference type="PANTHER" id="PTHR14744:SF16">
    <property type="entry name" value="HISTONE ACETYLTRANSFERASE MCC1"/>
    <property type="match status" value="1"/>
</dbReference>
<dbReference type="PANTHER" id="PTHR14744">
    <property type="entry name" value="N-ALPHA-ACETYLTRANSFERASE 60"/>
    <property type="match status" value="1"/>
</dbReference>
<dbReference type="Pfam" id="PF00583">
    <property type="entry name" value="Acetyltransf_1"/>
    <property type="match status" value="1"/>
</dbReference>
<dbReference type="SUPFAM" id="SSF55729">
    <property type="entry name" value="Acyl-CoA N-acyltransferases (Nat)"/>
    <property type="match status" value="1"/>
</dbReference>
<dbReference type="PROSITE" id="PS51186">
    <property type="entry name" value="GNAT"/>
    <property type="match status" value="1"/>
</dbReference>
<evidence type="ECO:0000255" key="1">
    <source>
        <dbReference type="PROSITE-ProRule" id="PRU00532"/>
    </source>
</evidence>
<evidence type="ECO:0000269" key="2">
    <source>
    </source>
</evidence>
<evidence type="ECO:0000305" key="3"/>
<evidence type="ECO:0000305" key="4">
    <source>
    </source>
</evidence>
<accession>Q9M8T9</accession>
<protein>
    <recommendedName>
        <fullName>Histone acetyltransferase MCC1</fullName>
        <ecNumber>2.3.1.48</ecNumber>
    </recommendedName>
    <alternativeName>
        <fullName>Protein MEIOTIC CONTROL OF CROSSOVERS 1</fullName>
    </alternativeName>
</protein>